<organism>
    <name type="scientific">Homo sapiens</name>
    <name type="common">Human</name>
    <dbReference type="NCBI Taxonomy" id="9606"/>
    <lineage>
        <taxon>Eukaryota</taxon>
        <taxon>Metazoa</taxon>
        <taxon>Chordata</taxon>
        <taxon>Craniata</taxon>
        <taxon>Vertebrata</taxon>
        <taxon>Euteleostomi</taxon>
        <taxon>Mammalia</taxon>
        <taxon>Eutheria</taxon>
        <taxon>Euarchontoglires</taxon>
        <taxon>Primates</taxon>
        <taxon>Haplorrhini</taxon>
        <taxon>Catarrhini</taxon>
        <taxon>Hominidae</taxon>
        <taxon>Homo</taxon>
    </lineage>
</organism>
<protein>
    <recommendedName>
        <fullName evidence="8">DCN1-like protein 4</fullName>
        <shortName evidence="7">DCNL4</shortName>
    </recommendedName>
    <alternativeName>
        <fullName>DCUN1 domain-containing protein 4</fullName>
    </alternativeName>
    <alternativeName>
        <fullName>Defective in cullin neddylation protein 1-like protein 4</fullName>
    </alternativeName>
</protein>
<feature type="chain" id="PRO_0000129503" description="DCN1-like protein 4">
    <location>
        <begin position="1"/>
        <end position="292"/>
    </location>
</feature>
<feature type="domain" description="DCUN1" evidence="1">
    <location>
        <begin position="101"/>
        <end position="287"/>
    </location>
</feature>
<feature type="region of interest" description="Disordered" evidence="2">
    <location>
        <begin position="43"/>
        <end position="83"/>
    </location>
</feature>
<feature type="compositionally biased region" description="Polar residues" evidence="2">
    <location>
        <begin position="45"/>
        <end position="56"/>
    </location>
</feature>
<feature type="cross-link" description="Glycyl lysine isopeptide (Lys-Gly) (interchain with G-Cter in SUMO2)" evidence="11 12">
    <location>
        <position position="95"/>
    </location>
</feature>
<feature type="splice variant" id="VSP_054381" description="In isoform 3." evidence="5">
    <original>MHSDAAAVN</original>
    <variation>MEVEAALGCSGQGRGCGGVAPAGRGRERASERGTRVRISKGLSGAGGSVRKAD</variation>
    <location>
        <begin position="1"/>
        <end position="9"/>
    </location>
</feature>
<feature type="splice variant" id="VSP_016016" description="In isoform 2." evidence="6">
    <location>
        <begin position="206"/>
        <end position="240"/>
    </location>
</feature>
<feature type="mutagenesis site" description="Does not affect localization at nucleus; when associated with R-274 and A-280." evidence="4">
    <original>D</original>
    <variation>A</variation>
    <location>
        <position position="250"/>
    </location>
</feature>
<feature type="mutagenesis site" description="Does not affect localization at nucleus; when associated with A-250 and A-280." evidence="4">
    <original>A</original>
    <variation>R</variation>
    <location>
        <position position="274"/>
    </location>
</feature>
<feature type="mutagenesis site" description="Does not affect localization at nucleus; when associated with A-250 and R-274." evidence="4">
    <original>D</original>
    <variation>A</variation>
    <location>
        <position position="280"/>
    </location>
</feature>
<feature type="helix" evidence="13">
    <location>
        <begin position="104"/>
        <end position="114"/>
    </location>
</feature>
<feature type="turn" evidence="13">
    <location>
        <begin position="115"/>
        <end position="118"/>
    </location>
</feature>
<feature type="helix" evidence="13">
    <location>
        <begin position="122"/>
        <end position="132"/>
    </location>
</feature>
<feature type="strand" evidence="13">
    <location>
        <begin position="136"/>
        <end position="138"/>
    </location>
</feature>
<feature type="helix" evidence="13">
    <location>
        <begin position="139"/>
        <end position="147"/>
    </location>
</feature>
<feature type="helix" evidence="13">
    <location>
        <begin position="158"/>
        <end position="167"/>
    </location>
</feature>
<feature type="helix" evidence="13">
    <location>
        <begin position="173"/>
        <end position="177"/>
    </location>
</feature>
<feature type="helix" evidence="13">
    <location>
        <begin position="180"/>
        <end position="185"/>
    </location>
</feature>
<feature type="helix" evidence="13">
    <location>
        <begin position="186"/>
        <end position="188"/>
    </location>
</feature>
<feature type="helix" evidence="13">
    <location>
        <begin position="190"/>
        <end position="204"/>
    </location>
</feature>
<feature type="strand" evidence="13">
    <location>
        <begin position="211"/>
        <end position="213"/>
    </location>
</feature>
<feature type="helix" evidence="13">
    <location>
        <begin position="214"/>
        <end position="225"/>
    </location>
</feature>
<feature type="turn" evidence="13">
    <location>
        <begin position="226"/>
        <end position="228"/>
    </location>
</feature>
<feature type="helix" evidence="13">
    <location>
        <begin position="232"/>
        <end position="241"/>
    </location>
</feature>
<feature type="strand" evidence="13">
    <location>
        <begin position="245"/>
        <end position="248"/>
    </location>
</feature>
<feature type="helix" evidence="13">
    <location>
        <begin position="249"/>
        <end position="261"/>
    </location>
</feature>
<feature type="helix" evidence="13">
    <location>
        <begin position="277"/>
        <end position="289"/>
    </location>
</feature>
<keyword id="KW-0002">3D-structure</keyword>
<keyword id="KW-0025">Alternative splicing</keyword>
<keyword id="KW-1017">Isopeptide bond</keyword>
<keyword id="KW-0539">Nucleus</keyword>
<keyword id="KW-1267">Proteomics identification</keyword>
<keyword id="KW-1185">Reference proteome</keyword>
<keyword id="KW-0832">Ubl conjugation</keyword>
<sequence>MHSDAAAVNFQLNSHLSTLANIHKIYHTLNKLNLTEDIGQDDHQTGSLRSCSSSDCFNKVMPPRKKRRPASGDDLSAKKSRHDSMYRKYDSTRIKTEEEAFSSKRCLEWFYEYAGTDDVVGPEGMEKFCEDIGVEPENVVMLVLAWKLDAQNMGYFTLQEWLKGMTSLQCDTTEKLRNTLDYLRSFLNDSTNFKLIYRYAFDFAREKDQRSLDINTAKCMLGLLLGKIWPLFPVFHQFLEQSKYKVINKDQWCNVLEFSRTINLDLSNYDEDGAWPVLLDEFVEWYKDKQMS</sequence>
<evidence type="ECO:0000255" key="1">
    <source>
        <dbReference type="PROSITE-ProRule" id="PRU00574"/>
    </source>
</evidence>
<evidence type="ECO:0000256" key="2">
    <source>
        <dbReference type="SAM" id="MobiDB-lite"/>
    </source>
</evidence>
<evidence type="ECO:0000269" key="3">
    <source>
    </source>
</evidence>
<evidence type="ECO:0000269" key="4">
    <source>
    </source>
</evidence>
<evidence type="ECO:0000303" key="5">
    <source>
    </source>
</evidence>
<evidence type="ECO:0000303" key="6">
    <source>
    </source>
</evidence>
<evidence type="ECO:0000303" key="7">
    <source>
    </source>
</evidence>
<evidence type="ECO:0000305" key="8"/>
<evidence type="ECO:0000312" key="9">
    <source>
        <dbReference type="HGNC" id="HGNC:28998"/>
    </source>
</evidence>
<evidence type="ECO:0007744" key="10">
    <source>
        <dbReference type="PDB" id="5V89"/>
    </source>
</evidence>
<evidence type="ECO:0007744" key="11">
    <source>
    </source>
</evidence>
<evidence type="ECO:0007744" key="12">
    <source>
    </source>
</evidence>
<evidence type="ECO:0007829" key="13">
    <source>
        <dbReference type="PDB" id="5V89"/>
    </source>
</evidence>
<reference key="1">
    <citation type="journal article" date="1996" name="DNA Res.">
        <title>Prediction of the coding sequences of unidentified human genes. VI. The coding sequences of 80 new genes (KIAA0201-KIAA0280) deduced by analysis of cDNA clones from cell line KG-1 and brain.</title>
        <authorList>
            <person name="Nagase T."/>
            <person name="Seki N."/>
            <person name="Ishikawa K."/>
            <person name="Ohira M."/>
            <person name="Kawarabayasi Y."/>
            <person name="Ohara O."/>
            <person name="Tanaka A."/>
            <person name="Kotani H."/>
            <person name="Miyajima N."/>
            <person name="Nomura N."/>
        </authorList>
    </citation>
    <scope>NUCLEOTIDE SEQUENCE [LARGE SCALE MRNA] (ISOFORM 1)</scope>
    <source>
        <tissue>Brain</tissue>
    </source>
</reference>
<reference key="2">
    <citation type="journal article" date="2004" name="Nat. Genet.">
        <title>Complete sequencing and characterization of 21,243 full-length human cDNAs.</title>
        <authorList>
            <person name="Ota T."/>
            <person name="Suzuki Y."/>
            <person name="Nishikawa T."/>
            <person name="Otsuki T."/>
            <person name="Sugiyama T."/>
            <person name="Irie R."/>
            <person name="Wakamatsu A."/>
            <person name="Hayashi K."/>
            <person name="Sato H."/>
            <person name="Nagai K."/>
            <person name="Kimura K."/>
            <person name="Makita H."/>
            <person name="Sekine M."/>
            <person name="Obayashi M."/>
            <person name="Nishi T."/>
            <person name="Shibahara T."/>
            <person name="Tanaka T."/>
            <person name="Ishii S."/>
            <person name="Yamamoto J."/>
            <person name="Saito K."/>
            <person name="Kawai Y."/>
            <person name="Isono Y."/>
            <person name="Nakamura Y."/>
            <person name="Nagahari K."/>
            <person name="Murakami K."/>
            <person name="Yasuda T."/>
            <person name="Iwayanagi T."/>
            <person name="Wagatsuma M."/>
            <person name="Shiratori A."/>
            <person name="Sudo H."/>
            <person name="Hosoiri T."/>
            <person name="Kaku Y."/>
            <person name="Kodaira H."/>
            <person name="Kondo H."/>
            <person name="Sugawara M."/>
            <person name="Takahashi M."/>
            <person name="Kanda K."/>
            <person name="Yokoi T."/>
            <person name="Furuya T."/>
            <person name="Kikkawa E."/>
            <person name="Omura Y."/>
            <person name="Abe K."/>
            <person name="Kamihara K."/>
            <person name="Katsuta N."/>
            <person name="Sato K."/>
            <person name="Tanikawa M."/>
            <person name="Yamazaki M."/>
            <person name="Ninomiya K."/>
            <person name="Ishibashi T."/>
            <person name="Yamashita H."/>
            <person name="Murakawa K."/>
            <person name="Fujimori K."/>
            <person name="Tanai H."/>
            <person name="Kimata M."/>
            <person name="Watanabe M."/>
            <person name="Hiraoka S."/>
            <person name="Chiba Y."/>
            <person name="Ishida S."/>
            <person name="Ono Y."/>
            <person name="Takiguchi S."/>
            <person name="Watanabe S."/>
            <person name="Yosida M."/>
            <person name="Hotuta T."/>
            <person name="Kusano J."/>
            <person name="Kanehori K."/>
            <person name="Takahashi-Fujii A."/>
            <person name="Hara H."/>
            <person name="Tanase T.-O."/>
            <person name="Nomura Y."/>
            <person name="Togiya S."/>
            <person name="Komai F."/>
            <person name="Hara R."/>
            <person name="Takeuchi K."/>
            <person name="Arita M."/>
            <person name="Imose N."/>
            <person name="Musashino K."/>
            <person name="Yuuki H."/>
            <person name="Oshima A."/>
            <person name="Sasaki N."/>
            <person name="Aotsuka S."/>
            <person name="Yoshikawa Y."/>
            <person name="Matsunawa H."/>
            <person name="Ichihara T."/>
            <person name="Shiohata N."/>
            <person name="Sano S."/>
            <person name="Moriya S."/>
            <person name="Momiyama H."/>
            <person name="Satoh N."/>
            <person name="Takami S."/>
            <person name="Terashima Y."/>
            <person name="Suzuki O."/>
            <person name="Nakagawa S."/>
            <person name="Senoh A."/>
            <person name="Mizoguchi H."/>
            <person name="Goto Y."/>
            <person name="Shimizu F."/>
            <person name="Wakebe H."/>
            <person name="Hishigaki H."/>
            <person name="Watanabe T."/>
            <person name="Sugiyama A."/>
            <person name="Takemoto M."/>
            <person name="Kawakami B."/>
            <person name="Yamazaki M."/>
            <person name="Watanabe K."/>
            <person name="Kumagai A."/>
            <person name="Itakura S."/>
            <person name="Fukuzumi Y."/>
            <person name="Fujimori Y."/>
            <person name="Komiyama M."/>
            <person name="Tashiro H."/>
            <person name="Tanigami A."/>
            <person name="Fujiwara T."/>
            <person name="Ono T."/>
            <person name="Yamada K."/>
            <person name="Fujii Y."/>
            <person name="Ozaki K."/>
            <person name="Hirao M."/>
            <person name="Ohmori Y."/>
            <person name="Kawabata A."/>
            <person name="Hikiji T."/>
            <person name="Kobatake N."/>
            <person name="Inagaki H."/>
            <person name="Ikema Y."/>
            <person name="Okamoto S."/>
            <person name="Okitani R."/>
            <person name="Kawakami T."/>
            <person name="Noguchi S."/>
            <person name="Itoh T."/>
            <person name="Shigeta K."/>
            <person name="Senba T."/>
            <person name="Matsumura K."/>
            <person name="Nakajima Y."/>
            <person name="Mizuno T."/>
            <person name="Morinaga M."/>
            <person name="Sasaki M."/>
            <person name="Togashi T."/>
            <person name="Oyama M."/>
            <person name="Hata H."/>
            <person name="Watanabe M."/>
            <person name="Komatsu T."/>
            <person name="Mizushima-Sugano J."/>
            <person name="Satoh T."/>
            <person name="Shirai Y."/>
            <person name="Takahashi Y."/>
            <person name="Nakagawa K."/>
            <person name="Okumura K."/>
            <person name="Nagase T."/>
            <person name="Nomura N."/>
            <person name="Kikuchi H."/>
            <person name="Masuho Y."/>
            <person name="Yamashita R."/>
            <person name="Nakai K."/>
            <person name="Yada T."/>
            <person name="Nakamura Y."/>
            <person name="Ohara O."/>
            <person name="Isogai T."/>
            <person name="Sugano S."/>
        </authorList>
    </citation>
    <scope>NUCLEOTIDE SEQUENCE [LARGE SCALE MRNA] (ISOFORM 3)</scope>
    <source>
        <tissue>Brain</tissue>
    </source>
</reference>
<reference key="3">
    <citation type="journal article" date="2007" name="BMC Genomics">
        <title>The full-ORF clone resource of the German cDNA consortium.</title>
        <authorList>
            <person name="Bechtel S."/>
            <person name="Rosenfelder H."/>
            <person name="Duda A."/>
            <person name="Schmidt C.P."/>
            <person name="Ernst U."/>
            <person name="Wellenreuther R."/>
            <person name="Mehrle A."/>
            <person name="Schuster C."/>
            <person name="Bahr A."/>
            <person name="Bloecker H."/>
            <person name="Heubner D."/>
            <person name="Hoerlein A."/>
            <person name="Michel G."/>
            <person name="Wedler H."/>
            <person name="Koehrer K."/>
            <person name="Ottenwaelder B."/>
            <person name="Poustka A."/>
            <person name="Wiemann S."/>
            <person name="Schupp I."/>
        </authorList>
    </citation>
    <scope>NUCLEOTIDE SEQUENCE [LARGE SCALE MRNA] (ISOFORM 1)</scope>
    <source>
        <tissue>Retina</tissue>
    </source>
</reference>
<reference key="4">
    <citation type="journal article" date="2005" name="Nature">
        <title>Generation and annotation of the DNA sequences of human chromosomes 2 and 4.</title>
        <authorList>
            <person name="Hillier L.W."/>
            <person name="Graves T.A."/>
            <person name="Fulton R.S."/>
            <person name="Fulton L.A."/>
            <person name="Pepin K.H."/>
            <person name="Minx P."/>
            <person name="Wagner-McPherson C."/>
            <person name="Layman D."/>
            <person name="Wylie K."/>
            <person name="Sekhon M."/>
            <person name="Becker M.C."/>
            <person name="Fewell G.A."/>
            <person name="Delehaunty K.D."/>
            <person name="Miner T.L."/>
            <person name="Nash W.E."/>
            <person name="Kremitzki C."/>
            <person name="Oddy L."/>
            <person name="Du H."/>
            <person name="Sun H."/>
            <person name="Bradshaw-Cordum H."/>
            <person name="Ali J."/>
            <person name="Carter J."/>
            <person name="Cordes M."/>
            <person name="Harris A."/>
            <person name="Isak A."/>
            <person name="van Brunt A."/>
            <person name="Nguyen C."/>
            <person name="Du F."/>
            <person name="Courtney L."/>
            <person name="Kalicki J."/>
            <person name="Ozersky P."/>
            <person name="Abbott S."/>
            <person name="Armstrong J."/>
            <person name="Belter E.A."/>
            <person name="Caruso L."/>
            <person name="Cedroni M."/>
            <person name="Cotton M."/>
            <person name="Davidson T."/>
            <person name="Desai A."/>
            <person name="Elliott G."/>
            <person name="Erb T."/>
            <person name="Fronick C."/>
            <person name="Gaige T."/>
            <person name="Haakenson W."/>
            <person name="Haglund K."/>
            <person name="Holmes A."/>
            <person name="Harkins R."/>
            <person name="Kim K."/>
            <person name="Kruchowski S.S."/>
            <person name="Strong C.M."/>
            <person name="Grewal N."/>
            <person name="Goyea E."/>
            <person name="Hou S."/>
            <person name="Levy A."/>
            <person name="Martinka S."/>
            <person name="Mead K."/>
            <person name="McLellan M.D."/>
            <person name="Meyer R."/>
            <person name="Randall-Maher J."/>
            <person name="Tomlinson C."/>
            <person name="Dauphin-Kohlberg S."/>
            <person name="Kozlowicz-Reilly A."/>
            <person name="Shah N."/>
            <person name="Swearengen-Shahid S."/>
            <person name="Snider J."/>
            <person name="Strong J.T."/>
            <person name="Thompson J."/>
            <person name="Yoakum M."/>
            <person name="Leonard S."/>
            <person name="Pearman C."/>
            <person name="Trani L."/>
            <person name="Radionenko M."/>
            <person name="Waligorski J.E."/>
            <person name="Wang C."/>
            <person name="Rock S.M."/>
            <person name="Tin-Wollam A.-M."/>
            <person name="Maupin R."/>
            <person name="Latreille P."/>
            <person name="Wendl M.C."/>
            <person name="Yang S.-P."/>
            <person name="Pohl C."/>
            <person name="Wallis J.W."/>
            <person name="Spieth J."/>
            <person name="Bieri T.A."/>
            <person name="Berkowicz N."/>
            <person name="Nelson J.O."/>
            <person name="Osborne J."/>
            <person name="Ding L."/>
            <person name="Meyer R."/>
            <person name="Sabo A."/>
            <person name="Shotland Y."/>
            <person name="Sinha P."/>
            <person name="Wohldmann P.E."/>
            <person name="Cook L.L."/>
            <person name="Hickenbotham M.T."/>
            <person name="Eldred J."/>
            <person name="Williams D."/>
            <person name="Jones T.A."/>
            <person name="She X."/>
            <person name="Ciccarelli F.D."/>
            <person name="Izaurralde E."/>
            <person name="Taylor J."/>
            <person name="Schmutz J."/>
            <person name="Myers R.M."/>
            <person name="Cox D.R."/>
            <person name="Huang X."/>
            <person name="McPherson J.D."/>
            <person name="Mardis E.R."/>
            <person name="Clifton S.W."/>
            <person name="Warren W.C."/>
            <person name="Chinwalla A.T."/>
            <person name="Eddy S.R."/>
            <person name="Marra M.A."/>
            <person name="Ovcharenko I."/>
            <person name="Furey T.S."/>
            <person name="Miller W."/>
            <person name="Eichler E.E."/>
            <person name="Bork P."/>
            <person name="Suyama M."/>
            <person name="Torrents D."/>
            <person name="Waterston R.H."/>
            <person name="Wilson R.K."/>
        </authorList>
    </citation>
    <scope>NUCLEOTIDE SEQUENCE [LARGE SCALE GENOMIC DNA]</scope>
</reference>
<reference key="5">
    <citation type="journal article" date="2004" name="Genome Res.">
        <title>The status, quality, and expansion of the NIH full-length cDNA project: the Mammalian Gene Collection (MGC).</title>
        <authorList>
            <consortium name="The MGC Project Team"/>
        </authorList>
    </citation>
    <scope>NUCLEOTIDE SEQUENCE [LARGE SCALE MRNA] (ISOFORM 2)</scope>
    <source>
        <tissue>Uterus</tissue>
    </source>
</reference>
<reference key="6">
    <citation type="journal article" date="2011" name="BMC Syst. Biol.">
        <title>Initial characterization of the human central proteome.</title>
        <authorList>
            <person name="Burkard T.R."/>
            <person name="Planyavsky M."/>
            <person name="Kaupe I."/>
            <person name="Breitwieser F.P."/>
            <person name="Buerckstuemmer T."/>
            <person name="Bennett K.L."/>
            <person name="Superti-Furga G."/>
            <person name="Colinge J."/>
        </authorList>
    </citation>
    <scope>IDENTIFICATION BY MASS SPECTROMETRY [LARGE SCALE ANALYSIS]</scope>
</reference>
<reference key="7">
    <citation type="journal article" date="2013" name="Structure">
        <title>Structural conservation of distinctive N-terminal acetylation-dependent interactions across a family of mammalian NEDD8 ligation enzymes.</title>
        <authorList>
            <person name="Monda J.K."/>
            <person name="Scott D.C."/>
            <person name="Miller D.J."/>
            <person name="Lydeard J."/>
            <person name="King D."/>
            <person name="Harper J.W."/>
            <person name="Bennett E.J."/>
            <person name="Schulman B.A."/>
        </authorList>
    </citation>
    <scope>DOMAIN</scope>
    <scope>INTERACTION WITH CUL1; CUL2; CUL3; CUL4A; CUL4B; CUL5; UBE2F AND UBE2M</scope>
    <scope>FUNCTION</scope>
</reference>
<reference key="8">
    <citation type="journal article" date="2014" name="Nat. Struct. Mol. Biol.">
        <title>Uncovering global SUMOylation signaling networks in a site-specific manner.</title>
        <authorList>
            <person name="Hendriks I.A."/>
            <person name="D'Souza R.C."/>
            <person name="Yang B."/>
            <person name="Verlaan-de Vries M."/>
            <person name="Mann M."/>
            <person name="Vertegaal A.C."/>
        </authorList>
    </citation>
    <scope>SUMOYLATION [LARGE SCALE ANALYSIS] AT LYS-95</scope>
    <scope>IDENTIFICATION BY MASS SPECTROMETRY [LARGE SCALE ANALYSIS]</scope>
</reference>
<reference key="9">
    <citation type="journal article" date="2016" name="J. Cell Sci.">
        <title>Characterization of the mammalian family of DCN-type NEDD8 E3 ligases.</title>
        <authorList>
            <person name="Keuss M.J."/>
            <person name="Thomas Y."/>
            <person name="Mcarthur R."/>
            <person name="Wood N.T."/>
            <person name="Knebel A."/>
            <person name="Kurz T."/>
        </authorList>
    </citation>
    <scope>INTERACTION WITH CUL1; CUL2; CUL3; CUL5; CAND; RNF7 AND RBX1</scope>
    <scope>SUBCELLULAR LOCATION</scope>
    <scope>FUNCTION</scope>
    <scope>MUTAGENESIS OF ASP-250; ALA-274 AND ASP-280</scope>
</reference>
<reference key="10">
    <citation type="journal article" date="2017" name="Nat. Struct. Mol. Biol.">
        <title>Site-specific mapping of the human SUMO proteome reveals co-modification with phosphorylation.</title>
        <authorList>
            <person name="Hendriks I.A."/>
            <person name="Lyon D."/>
            <person name="Young C."/>
            <person name="Jensen L.J."/>
            <person name="Vertegaal A.C."/>
            <person name="Nielsen M.L."/>
        </authorList>
    </citation>
    <scope>SUMOYLATION [LARGE SCALE ANALYSIS] AT LYS-95</scope>
    <scope>IDENTIFICATION BY MASS SPECTROMETRY [LARGE SCALE ANALYSIS]</scope>
</reference>
<reference evidence="10" key="11">
    <citation type="journal article" date="2017" name="Nat. Chem. Biol.">
        <title>Blocking an N-terminal acetylation-dependent protein interaction inhibits an E3 ligase.</title>
        <authorList>
            <person name="Scott D.C."/>
            <person name="Hammill J.T."/>
            <person name="Min J."/>
            <person name="Rhee D.Y."/>
            <person name="Connelly M."/>
            <person name="Sviderskiy V.O."/>
            <person name="Bhasin D."/>
            <person name="Chen Y."/>
            <person name="Ong S.S."/>
            <person name="Chai S.C."/>
            <person name="Goktug A.N."/>
            <person name="Huang G."/>
            <person name="Monda J.K."/>
            <person name="Low J."/>
            <person name="Kim H.S."/>
            <person name="Paulo J.A."/>
            <person name="Cannon J.R."/>
            <person name="Shelat A.A."/>
            <person name="Chen T."/>
            <person name="Kelsall I.R."/>
            <person name="Alpi A.F."/>
            <person name="Pagala V."/>
            <person name="Wang X."/>
            <person name="Peng J."/>
            <person name="Singh B."/>
            <person name="Harper J.W."/>
            <person name="Schulman B.A."/>
            <person name="Guy R.K."/>
        </authorList>
    </citation>
    <scope>X-RAY CRYSTALLOGRAPHY (1.55 ANGSTROMS) OF 102-292 IN COMPLEX WITH CUL1</scope>
</reference>
<accession>Q92564</accession>
<accession>B4DH25</accession>
<accession>Q7Z3F3</accession>
<accession>Q7Z6B8</accession>
<name>DCNL4_HUMAN</name>
<comment type="function">
    <text evidence="3 4">Contributes to the neddylation of all cullins by transferring NEDD8 from N-terminally acetylated NEDD8-conjugating E2s enzyme to different cullin C-terminal domain-RBX complexes which are necessary for the activation of cullin-RING E3 ubiquitin ligases (CRLs).</text>
</comment>
<comment type="subunit">
    <text evidence="3 4">Interacts (via the DCUN1 domain) with the unneddylated cullins: interacts with CUL1, CUL2, CUL3, CUL4A, CUL4B and CUL5; these interactions promote the cullin neddylation and the identity of the cullin dictates the affinity of the interaction (PubMed:23201271, PubMed:26906416). Interacts with RBX1 and RNF7 (PubMed:26906416). Interacts with CAND1; this interaction is bridged by cullins such as CUL3 and strongly inhibits the neddylation of CUL3. These CAND-cullin-DCNL complexes can only be neddylated in the presence of a substrate adapter (PubMed:26906416). Interacts (via DCUN1 domain) with UBE2M (N-terminally acetylated form) and probably with UBE2F (N-terminally acetylated form) (PubMed:23201271).</text>
</comment>
<comment type="interaction">
    <interactant intactId="EBI-2654610">
        <id>Q92564</id>
    </interactant>
    <interactant intactId="EBI-8826488">
        <id>PRO_0000037946</id>
        <dbReference type="UniProtKB" id="P29991"/>
    </interactant>
    <organismsDiffer>true</organismsDiffer>
    <experiments>3</experiments>
</comment>
<comment type="subcellular location">
    <subcellularLocation>
        <location evidence="4">Nucleus</location>
    </subcellularLocation>
</comment>
<comment type="alternative products">
    <event type="alternative splicing"/>
    <isoform>
        <id>Q92564-1</id>
        <name>1</name>
        <sequence type="displayed"/>
    </isoform>
    <isoform>
        <id>Q92564-2</id>
        <name>2</name>
        <sequence type="described" ref="VSP_016016"/>
    </isoform>
    <isoform>
        <id>Q92564-3</id>
        <name>3</name>
        <sequence type="described" ref="VSP_054381"/>
    </isoform>
</comment>
<comment type="domain">
    <text evidence="3">The DCUN1 domain, also known as PONY domain, mediates the interaction with different cullins (PubMed:23201271). The DCUN1 domain mediates the interaction with the N-terminally acetylated NEDD8-conjugating E2s enzyme leading to the NEDD8 transfer from N-terminally acetylated NEDD8-conjugating E2s enzyme to different cullin C-terminal domain-RBX complexes; the neddylation efficiency correlates with the DCUN1D5-cullin and DCUN1D5-E2 interaction affinities (PubMed:23201271).</text>
</comment>
<comment type="sequence caution" evidence="8">
    <conflict type="erroneous initiation">
        <sequence resource="EMBL-CDS" id="BAA13405"/>
    </conflict>
</comment>
<comment type="sequence caution" evidence="8">
    <conflict type="erroneous initiation">
        <sequence resource="EMBL-CDS" id="CAD97912"/>
    </conflict>
</comment>
<proteinExistence type="evidence at protein level"/>
<gene>
    <name evidence="9" type="primary">DCUN1D4</name>
    <name type="synonym">KIAA0276</name>
</gene>
<dbReference type="EMBL" id="D87466">
    <property type="protein sequence ID" value="BAA13405.1"/>
    <property type="status" value="ALT_INIT"/>
    <property type="molecule type" value="mRNA"/>
</dbReference>
<dbReference type="EMBL" id="AK294894">
    <property type="protein sequence ID" value="BAG57986.1"/>
    <property type="molecule type" value="mRNA"/>
</dbReference>
<dbReference type="EMBL" id="BX537944">
    <property type="protein sequence ID" value="CAD97912.1"/>
    <property type="status" value="ALT_INIT"/>
    <property type="molecule type" value="mRNA"/>
</dbReference>
<dbReference type="EMBL" id="AC027271">
    <property type="status" value="NOT_ANNOTATED_CDS"/>
    <property type="molecule type" value="Genomic_DNA"/>
</dbReference>
<dbReference type="EMBL" id="BC053897">
    <property type="protein sequence ID" value="AAH53897.2"/>
    <property type="molecule type" value="mRNA"/>
</dbReference>
<dbReference type="CCDS" id="CCDS33982.1">
    <molecule id="Q92564-1"/>
</dbReference>
<dbReference type="CCDS" id="CCDS3487.2">
    <molecule id="Q92564-2"/>
</dbReference>
<dbReference type="CCDS" id="CCDS75123.1">
    <molecule id="Q92564-3"/>
</dbReference>
<dbReference type="RefSeq" id="NP_001035492.1">
    <molecule id="Q92564-1"/>
    <property type="nucleotide sequence ID" value="NM_001040402.3"/>
</dbReference>
<dbReference type="RefSeq" id="NP_001274684.1">
    <molecule id="Q92564-3"/>
    <property type="nucleotide sequence ID" value="NM_001287755.1"/>
</dbReference>
<dbReference type="RefSeq" id="NP_001274686.1">
    <property type="nucleotide sequence ID" value="NM_001287757.1"/>
</dbReference>
<dbReference type="RefSeq" id="NP_055930.2">
    <molecule id="Q92564-2"/>
    <property type="nucleotide sequence ID" value="NM_015115.4"/>
</dbReference>
<dbReference type="PDB" id="5V89">
    <property type="method" value="X-ray"/>
    <property type="resolution" value="1.55 A"/>
    <property type="chains" value="A=102-292"/>
</dbReference>
<dbReference type="PDBsum" id="5V89"/>
<dbReference type="SMR" id="Q92564"/>
<dbReference type="BioGRID" id="116759">
    <property type="interactions" value="28"/>
</dbReference>
<dbReference type="FunCoup" id="Q92564">
    <property type="interactions" value="881"/>
</dbReference>
<dbReference type="IntAct" id="Q92564">
    <property type="interactions" value="9"/>
</dbReference>
<dbReference type="STRING" id="9606.ENSP00000389900"/>
<dbReference type="BindingDB" id="Q92564"/>
<dbReference type="ChEMBL" id="CHEMBL4295914"/>
<dbReference type="GlyGen" id="Q92564">
    <property type="glycosylation" value="2 sites, 1 N-linked glycan (1 site), 1 O-linked glycan (1 site)"/>
</dbReference>
<dbReference type="iPTMnet" id="Q92564"/>
<dbReference type="PhosphoSitePlus" id="Q92564"/>
<dbReference type="BioMuta" id="DCUN1D4"/>
<dbReference type="DMDM" id="78099237"/>
<dbReference type="jPOST" id="Q92564"/>
<dbReference type="MassIVE" id="Q92564"/>
<dbReference type="PaxDb" id="9606-ENSP00000389900"/>
<dbReference type="PeptideAtlas" id="Q92564"/>
<dbReference type="ProteomicsDB" id="4184"/>
<dbReference type="ProteomicsDB" id="75320">
    <molecule id="Q92564-1"/>
</dbReference>
<dbReference type="ProteomicsDB" id="75321">
    <molecule id="Q92564-2"/>
</dbReference>
<dbReference type="Pumba" id="Q92564"/>
<dbReference type="Antibodypedia" id="23882">
    <property type="antibodies" value="100 antibodies from 16 providers"/>
</dbReference>
<dbReference type="DNASU" id="23142"/>
<dbReference type="Ensembl" id="ENST00000334635.10">
    <molecule id="Q92564-1"/>
    <property type="protein sequence ID" value="ENSP00000334625.5"/>
    <property type="gene ID" value="ENSG00000109184.15"/>
</dbReference>
<dbReference type="Ensembl" id="ENST00000381441.7">
    <molecule id="Q92564-2"/>
    <property type="protein sequence ID" value="ENSP00000370850.3"/>
    <property type="gene ID" value="ENSG00000109184.15"/>
</dbReference>
<dbReference type="Ensembl" id="ENST00000451288.6">
    <molecule id="Q92564-3"/>
    <property type="protein sequence ID" value="ENSP00000389900.2"/>
    <property type="gene ID" value="ENSG00000109184.15"/>
</dbReference>
<dbReference type="GeneID" id="23142"/>
<dbReference type="KEGG" id="hsa:23142"/>
<dbReference type="MANE-Select" id="ENST00000334635.10">
    <property type="protein sequence ID" value="ENSP00000334625.5"/>
    <property type="RefSeq nucleotide sequence ID" value="NM_001040402.3"/>
    <property type="RefSeq protein sequence ID" value="NP_001035492.1"/>
</dbReference>
<dbReference type="UCSC" id="uc003gze.5">
    <molecule id="Q92564-1"/>
    <property type="organism name" value="human"/>
</dbReference>
<dbReference type="AGR" id="HGNC:28998"/>
<dbReference type="CTD" id="23142"/>
<dbReference type="DisGeNET" id="23142"/>
<dbReference type="GeneCards" id="DCUN1D4"/>
<dbReference type="HGNC" id="HGNC:28998">
    <property type="gene designation" value="DCUN1D4"/>
</dbReference>
<dbReference type="HPA" id="ENSG00000109184">
    <property type="expression patterns" value="Low tissue specificity"/>
</dbReference>
<dbReference type="MIM" id="612977">
    <property type="type" value="gene"/>
</dbReference>
<dbReference type="neXtProt" id="NX_Q92564"/>
<dbReference type="OpenTargets" id="ENSG00000109184"/>
<dbReference type="PharmGKB" id="PA142672010"/>
<dbReference type="VEuPathDB" id="HostDB:ENSG00000109184"/>
<dbReference type="eggNOG" id="KOG3077">
    <property type="taxonomic scope" value="Eukaryota"/>
</dbReference>
<dbReference type="GeneTree" id="ENSGT00940000156935"/>
<dbReference type="HOGENOM" id="CLU_047042_3_1_1"/>
<dbReference type="InParanoid" id="Q92564"/>
<dbReference type="OMA" id="CIAWFRE"/>
<dbReference type="OrthoDB" id="286637at2759"/>
<dbReference type="PAN-GO" id="Q92564">
    <property type="GO annotations" value="6 GO annotations based on evolutionary models"/>
</dbReference>
<dbReference type="PhylomeDB" id="Q92564"/>
<dbReference type="TreeFam" id="TF354270"/>
<dbReference type="PathwayCommons" id="Q92564"/>
<dbReference type="Reactome" id="R-HSA-8951664">
    <property type="pathway name" value="Neddylation"/>
</dbReference>
<dbReference type="SignaLink" id="Q92564"/>
<dbReference type="BioGRID-ORCS" id="23142">
    <property type="hits" value="20 hits in 1154 CRISPR screens"/>
</dbReference>
<dbReference type="ChiTaRS" id="DCUN1D4">
    <property type="organism name" value="human"/>
</dbReference>
<dbReference type="GeneWiki" id="DCUN1D4"/>
<dbReference type="GenomeRNAi" id="23142"/>
<dbReference type="Pharos" id="Q92564">
    <property type="development level" value="Tchem"/>
</dbReference>
<dbReference type="PRO" id="PR:Q92564"/>
<dbReference type="Proteomes" id="UP000005640">
    <property type="component" value="Chromosome 4"/>
</dbReference>
<dbReference type="RNAct" id="Q92564">
    <property type="molecule type" value="protein"/>
</dbReference>
<dbReference type="Bgee" id="ENSG00000109184">
    <property type="expression patterns" value="Expressed in calcaneal tendon and 200 other cell types or tissues"/>
</dbReference>
<dbReference type="ExpressionAtlas" id="Q92564">
    <property type="expression patterns" value="baseline and differential"/>
</dbReference>
<dbReference type="GO" id="GO:0005634">
    <property type="term" value="C:nucleus"/>
    <property type="evidence" value="ECO:0000314"/>
    <property type="project" value="LIFEdb"/>
</dbReference>
<dbReference type="GO" id="GO:0000151">
    <property type="term" value="C:ubiquitin ligase complex"/>
    <property type="evidence" value="ECO:0000318"/>
    <property type="project" value="GO_Central"/>
</dbReference>
<dbReference type="GO" id="GO:0097602">
    <property type="term" value="F:cullin family protein binding"/>
    <property type="evidence" value="ECO:0000315"/>
    <property type="project" value="UniProtKB"/>
</dbReference>
<dbReference type="GO" id="GO:0031624">
    <property type="term" value="F:ubiquitin conjugating enzyme binding"/>
    <property type="evidence" value="ECO:0000318"/>
    <property type="project" value="GO_Central"/>
</dbReference>
<dbReference type="GO" id="GO:0032182">
    <property type="term" value="F:ubiquitin-like protein binding"/>
    <property type="evidence" value="ECO:0000318"/>
    <property type="project" value="GO_Central"/>
</dbReference>
<dbReference type="GO" id="GO:2000436">
    <property type="term" value="P:positive regulation of protein neddylation"/>
    <property type="evidence" value="ECO:0000315"/>
    <property type="project" value="UniProtKB"/>
</dbReference>
<dbReference type="GO" id="GO:0045116">
    <property type="term" value="P:protein neddylation"/>
    <property type="evidence" value="ECO:0000318"/>
    <property type="project" value="GO_Central"/>
</dbReference>
<dbReference type="FunFam" id="1.10.238.10:FF:000041">
    <property type="entry name" value="DCN1-like protein"/>
    <property type="match status" value="1"/>
</dbReference>
<dbReference type="FunFam" id="1.10.238.200:FF:000002">
    <property type="entry name" value="DCN1-like protein"/>
    <property type="match status" value="1"/>
</dbReference>
<dbReference type="Gene3D" id="1.10.238.200">
    <property type="entry name" value="Cullin, PONY binding domain"/>
    <property type="match status" value="1"/>
</dbReference>
<dbReference type="Gene3D" id="1.10.238.10">
    <property type="entry name" value="EF-hand"/>
    <property type="match status" value="1"/>
</dbReference>
<dbReference type="InterPro" id="IPR014764">
    <property type="entry name" value="DCN-prot"/>
</dbReference>
<dbReference type="InterPro" id="IPR042460">
    <property type="entry name" value="DCN1-like_PONY"/>
</dbReference>
<dbReference type="InterPro" id="IPR005176">
    <property type="entry name" value="PONY_dom"/>
</dbReference>
<dbReference type="PANTHER" id="PTHR12281:SF8">
    <property type="entry name" value="DCN1-LIKE PROTEIN 4"/>
    <property type="match status" value="1"/>
</dbReference>
<dbReference type="PANTHER" id="PTHR12281">
    <property type="entry name" value="RP42 RELATED"/>
    <property type="match status" value="1"/>
</dbReference>
<dbReference type="Pfam" id="PF03556">
    <property type="entry name" value="Cullin_binding"/>
    <property type="match status" value="1"/>
</dbReference>
<dbReference type="PROSITE" id="PS51229">
    <property type="entry name" value="DCUN1"/>
    <property type="match status" value="1"/>
</dbReference>